<feature type="chain" id="PRO_0000324676" description="Peptidyl-prolyl cis-trans isomerase">
    <location>
        <begin position="1" status="less than"/>
        <end position="11" status="greater than"/>
    </location>
</feature>
<feature type="domain" description="PPIase cyclophilin-type" evidence="3">
    <location>
        <begin position="1" status="less than"/>
        <end position="11" status="greater than"/>
    </location>
</feature>
<feature type="non-terminal residue">
    <location>
        <position position="1"/>
    </location>
</feature>
<feature type="non-terminal residue">
    <location>
        <position position="11"/>
    </location>
</feature>
<dbReference type="EC" id="5.2.1.8"/>
<dbReference type="GO" id="GO:0005737">
    <property type="term" value="C:cytoplasm"/>
    <property type="evidence" value="ECO:0007669"/>
    <property type="project" value="UniProtKB-SubCell"/>
</dbReference>
<dbReference type="GO" id="GO:0003755">
    <property type="term" value="F:peptidyl-prolyl cis-trans isomerase activity"/>
    <property type="evidence" value="ECO:0007669"/>
    <property type="project" value="UniProtKB-KW"/>
</dbReference>
<proteinExistence type="evidence at protein level"/>
<accession>P85444</accession>
<organism>
    <name type="scientific">Penicillium glabrum</name>
    <name type="common">Penicillium frequentans</name>
    <dbReference type="NCBI Taxonomy" id="69773"/>
    <lineage>
        <taxon>Eukaryota</taxon>
        <taxon>Fungi</taxon>
        <taxon>Dikarya</taxon>
        <taxon>Ascomycota</taxon>
        <taxon>Pezizomycotina</taxon>
        <taxon>Eurotiomycetes</taxon>
        <taxon>Eurotiomycetidae</taxon>
        <taxon>Eurotiales</taxon>
        <taxon>Aspergillaceae</taxon>
        <taxon>Penicillium</taxon>
    </lineage>
</organism>
<evidence type="ECO:0000250" key="1">
    <source>
        <dbReference type="UniProtKB" id="Q8LDP4"/>
    </source>
</evidence>
<evidence type="ECO:0000255" key="2"/>
<evidence type="ECO:0000255" key="3">
    <source>
        <dbReference type="PROSITE-ProRule" id="PRU00156"/>
    </source>
</evidence>
<evidence type="ECO:0000269" key="4">
    <source ref="1"/>
</evidence>
<evidence type="ECO:0000305" key="5"/>
<reference evidence="5" key="1">
    <citation type="submission" date="2008-02" db="UniProtKB">
        <title>Identification of putative allergens from Penicillium glabrum using two-dimensional (2-D) gel electrophoresis immunoblotting approach.</title>
        <authorList>
            <person name="Raquel H."/>
            <person name="Jeno P."/>
            <person name="Moita C."/>
            <person name="Cardoso C."/>
            <person name="Sao Jose H."/>
            <person name="San-Romao V."/>
            <person name="Pinto Ricardo C."/>
            <person name="Oliveira M.M."/>
        </authorList>
    </citation>
    <scope>PROTEIN SEQUENCE</scope>
    <scope>ALLERGEN</scope>
    <source>
        <strain>B7</strain>
    </source>
</reference>
<keyword id="KW-0020">Allergen</keyword>
<keyword id="KW-0963">Cytoplasm</keyword>
<keyword id="KW-0903">Direct protein sequencing</keyword>
<keyword id="KW-0413">Isomerase</keyword>
<keyword id="KW-0697">Rotamase</keyword>
<sequence>KFADENFQLKH</sequence>
<protein>
    <recommendedName>
        <fullName>Peptidyl-prolyl cis-trans isomerase</fullName>
        <shortName>PPIase</shortName>
        <ecNumber>5.2.1.8</ecNumber>
    </recommendedName>
    <alternativeName>
        <fullName>Cyclophilin</fullName>
    </alternativeName>
    <alternativeName>
        <fullName>Rotamase</fullName>
    </alternativeName>
</protein>
<comment type="function">
    <text evidence="1">PPIases accelerate the folding of proteins. It catalyzes the cis-trans isomerization of proline imidic peptide bonds in oligopeptides (By similarity).</text>
</comment>
<comment type="catalytic activity">
    <reaction evidence="1">
        <text>[protein]-peptidylproline (omega=180) = [protein]-peptidylproline (omega=0)</text>
        <dbReference type="Rhea" id="RHEA:16237"/>
        <dbReference type="Rhea" id="RHEA-COMP:10747"/>
        <dbReference type="Rhea" id="RHEA-COMP:10748"/>
        <dbReference type="ChEBI" id="CHEBI:83833"/>
        <dbReference type="ChEBI" id="CHEBI:83834"/>
        <dbReference type="EC" id="5.2.1.8"/>
    </reaction>
</comment>
<comment type="activity regulation">
    <text evidence="1">Binds cyclosporin A (CsA). CsA mediates some of its effects via an inhibitory action on PPIase (By similarity).</text>
</comment>
<comment type="subcellular location">
    <subcellularLocation>
        <location>Cytoplasm</location>
    </subcellularLocation>
</comment>
<comment type="allergen">
    <text evidence="4">Causes an allergic reaction in human. Binds to IgE.</text>
</comment>
<comment type="similarity">
    <text evidence="2">Belongs to the cyclophilin-type PPIase family.</text>
</comment>
<name>PPIA_PENGL</name>